<accession>P85720</accession>
<sequence length="17" mass="1782">SGETSGEGNGMWFGPRL</sequence>
<protein>
    <recommendedName>
        <fullName evidence="1">Pyrokinin-5</fullName>
    </recommendedName>
    <alternativeName>
        <fullName evidence="1">FXPRL-amide</fullName>
    </alternativeName>
    <alternativeName>
        <fullName evidence="4">PerRu-Capa-PK</fullName>
    </alternativeName>
</protein>
<keyword id="KW-0027">Amidation</keyword>
<keyword id="KW-0903">Direct protein sequencing</keyword>
<keyword id="KW-0527">Neuropeptide</keyword>
<keyword id="KW-0964">Secreted</keyword>
<name>PPK5_PERRU</name>
<comment type="function">
    <text evidence="1">Myoactive.</text>
</comment>
<comment type="subcellular location">
    <subcellularLocation>
        <location evidence="5">Secreted</location>
    </subcellularLocation>
</comment>
<comment type="similarity">
    <text evidence="2">Belongs to the pyrokinin family.</text>
</comment>
<organism>
    <name type="scientific">Perisphaeria ruficornis</name>
    <name type="common">Cockroach</name>
    <dbReference type="NCBI Taxonomy" id="521516"/>
    <lineage>
        <taxon>Eukaryota</taxon>
        <taxon>Metazoa</taxon>
        <taxon>Ecdysozoa</taxon>
        <taxon>Arthropoda</taxon>
        <taxon>Hexapoda</taxon>
        <taxon>Insecta</taxon>
        <taxon>Pterygota</taxon>
        <taxon>Neoptera</taxon>
        <taxon>Polyneoptera</taxon>
        <taxon>Dictyoptera</taxon>
        <taxon>Blattodea</taxon>
        <taxon>Blaberoidea</taxon>
        <taxon>Blaberidae</taxon>
        <taxon>Perisphaerinae</taxon>
        <taxon>Perisphaeria</taxon>
    </lineage>
</organism>
<dbReference type="GO" id="GO:0005576">
    <property type="term" value="C:extracellular region"/>
    <property type="evidence" value="ECO:0007669"/>
    <property type="project" value="UniProtKB-SubCell"/>
</dbReference>
<dbReference type="GO" id="GO:0005184">
    <property type="term" value="F:neuropeptide hormone activity"/>
    <property type="evidence" value="ECO:0007669"/>
    <property type="project" value="InterPro"/>
</dbReference>
<dbReference type="GO" id="GO:0007218">
    <property type="term" value="P:neuropeptide signaling pathway"/>
    <property type="evidence" value="ECO:0007669"/>
    <property type="project" value="UniProtKB-KW"/>
</dbReference>
<dbReference type="InterPro" id="IPR001484">
    <property type="entry name" value="Pyrokinin_CS"/>
</dbReference>
<dbReference type="PROSITE" id="PS00539">
    <property type="entry name" value="PYROKININ"/>
    <property type="match status" value="1"/>
</dbReference>
<reference evidence="5" key="1">
    <citation type="journal article" date="2009" name="BMC Evol. Biol.">
        <title>A proteomic approach for studying insect phylogeny: CAPA peptides of ancient insect taxa (Dictyoptera, Blattoptera) as a test case.</title>
        <authorList>
            <person name="Roth S."/>
            <person name="Fromm B."/>
            <person name="Gaede G."/>
            <person name="Predel R."/>
        </authorList>
    </citation>
    <scope>PROTEIN SEQUENCE</scope>
    <scope>AMIDATION AT LEU-17</scope>
    <source>
        <tissue evidence="3">Abdominal perisympathetic organs</tissue>
    </source>
</reference>
<feature type="peptide" id="PRO_0000378713" description="Pyrokinin-5" evidence="3">
    <location>
        <begin position="1"/>
        <end position="17"/>
    </location>
</feature>
<feature type="modified residue" description="Leucine amide" evidence="3">
    <location>
        <position position="17"/>
    </location>
</feature>
<evidence type="ECO:0000250" key="1">
    <source>
        <dbReference type="UniProtKB" id="P82617"/>
    </source>
</evidence>
<evidence type="ECO:0000255" key="2"/>
<evidence type="ECO:0000269" key="3">
    <source>
    </source>
</evidence>
<evidence type="ECO:0000303" key="4">
    <source>
    </source>
</evidence>
<evidence type="ECO:0000305" key="5"/>
<proteinExistence type="evidence at protein level"/>